<reference key="1">
    <citation type="journal article" date="2004" name="Nat. Genet.">
        <title>Comparison of genome degradation in Paratyphi A and Typhi, human-restricted serovars of Salmonella enterica that cause typhoid.</title>
        <authorList>
            <person name="McClelland M."/>
            <person name="Sanderson K.E."/>
            <person name="Clifton S.W."/>
            <person name="Latreille P."/>
            <person name="Porwollik S."/>
            <person name="Sabo A."/>
            <person name="Meyer R."/>
            <person name="Bieri T."/>
            <person name="Ozersky P."/>
            <person name="McLellan M."/>
            <person name="Harkins C.R."/>
            <person name="Wang C."/>
            <person name="Nguyen C."/>
            <person name="Berghoff A."/>
            <person name="Elliott G."/>
            <person name="Kohlberg S."/>
            <person name="Strong C."/>
            <person name="Du F."/>
            <person name="Carter J."/>
            <person name="Kremizki C."/>
            <person name="Layman D."/>
            <person name="Leonard S."/>
            <person name="Sun H."/>
            <person name="Fulton L."/>
            <person name="Nash W."/>
            <person name="Miner T."/>
            <person name="Minx P."/>
            <person name="Delehaunty K."/>
            <person name="Fronick C."/>
            <person name="Magrini V."/>
            <person name="Nhan M."/>
            <person name="Warren W."/>
            <person name="Florea L."/>
            <person name="Spieth J."/>
            <person name="Wilson R.K."/>
        </authorList>
    </citation>
    <scope>NUCLEOTIDE SEQUENCE [LARGE SCALE GENOMIC DNA]</scope>
    <source>
        <strain>ATCC 9150 / SARB42</strain>
    </source>
</reference>
<name>DXR_SALPA</name>
<evidence type="ECO:0000255" key="1">
    <source>
        <dbReference type="HAMAP-Rule" id="MF_00183"/>
    </source>
</evidence>
<gene>
    <name evidence="1" type="primary">dxr</name>
    <name type="ordered locus">SPA0227</name>
</gene>
<dbReference type="EC" id="1.1.1.267" evidence="1"/>
<dbReference type="EMBL" id="CP000026">
    <property type="protein sequence ID" value="AAV76256.1"/>
    <property type="molecule type" value="Genomic_DNA"/>
</dbReference>
<dbReference type="SMR" id="Q5PD59"/>
<dbReference type="KEGG" id="spt:SPA0227"/>
<dbReference type="HOGENOM" id="CLU_035714_4_0_6"/>
<dbReference type="UniPathway" id="UPA00056">
    <property type="reaction ID" value="UER00092"/>
</dbReference>
<dbReference type="Proteomes" id="UP000008185">
    <property type="component" value="Chromosome"/>
</dbReference>
<dbReference type="GO" id="GO:0030604">
    <property type="term" value="F:1-deoxy-D-xylulose-5-phosphate reductoisomerase activity"/>
    <property type="evidence" value="ECO:0007669"/>
    <property type="project" value="UniProtKB-UniRule"/>
</dbReference>
<dbReference type="GO" id="GO:0030145">
    <property type="term" value="F:manganese ion binding"/>
    <property type="evidence" value="ECO:0007669"/>
    <property type="project" value="TreeGrafter"/>
</dbReference>
<dbReference type="GO" id="GO:0070402">
    <property type="term" value="F:NADPH binding"/>
    <property type="evidence" value="ECO:0007669"/>
    <property type="project" value="InterPro"/>
</dbReference>
<dbReference type="GO" id="GO:0051484">
    <property type="term" value="P:isopentenyl diphosphate biosynthetic process, methylerythritol 4-phosphate pathway involved in terpenoid biosynthetic process"/>
    <property type="evidence" value="ECO:0007669"/>
    <property type="project" value="TreeGrafter"/>
</dbReference>
<dbReference type="FunFam" id="1.10.1740.10:FF:000004">
    <property type="entry name" value="1-deoxy-D-xylulose 5-phosphate reductoisomerase"/>
    <property type="match status" value="1"/>
</dbReference>
<dbReference type="FunFam" id="3.40.50.720:FF:000045">
    <property type="entry name" value="1-deoxy-D-xylulose 5-phosphate reductoisomerase"/>
    <property type="match status" value="1"/>
</dbReference>
<dbReference type="Gene3D" id="1.10.1740.10">
    <property type="match status" value="1"/>
</dbReference>
<dbReference type="Gene3D" id="3.40.50.720">
    <property type="entry name" value="NAD(P)-binding Rossmann-like Domain"/>
    <property type="match status" value="1"/>
</dbReference>
<dbReference type="HAMAP" id="MF_00183">
    <property type="entry name" value="DXP_reductoisom"/>
    <property type="match status" value="1"/>
</dbReference>
<dbReference type="InterPro" id="IPR003821">
    <property type="entry name" value="DXP_reductoisomerase"/>
</dbReference>
<dbReference type="InterPro" id="IPR013644">
    <property type="entry name" value="DXP_reductoisomerase_C"/>
</dbReference>
<dbReference type="InterPro" id="IPR013512">
    <property type="entry name" value="DXP_reductoisomerase_N"/>
</dbReference>
<dbReference type="InterPro" id="IPR026877">
    <property type="entry name" value="DXPR_C"/>
</dbReference>
<dbReference type="InterPro" id="IPR036169">
    <property type="entry name" value="DXPR_C_sf"/>
</dbReference>
<dbReference type="InterPro" id="IPR036291">
    <property type="entry name" value="NAD(P)-bd_dom_sf"/>
</dbReference>
<dbReference type="NCBIfam" id="TIGR00243">
    <property type="entry name" value="Dxr"/>
    <property type="match status" value="1"/>
</dbReference>
<dbReference type="NCBIfam" id="NF003938">
    <property type="entry name" value="PRK05447.1-1"/>
    <property type="match status" value="1"/>
</dbReference>
<dbReference type="NCBIfam" id="NF009114">
    <property type="entry name" value="PRK12464.1"/>
    <property type="match status" value="1"/>
</dbReference>
<dbReference type="PANTHER" id="PTHR30525">
    <property type="entry name" value="1-DEOXY-D-XYLULOSE 5-PHOSPHATE REDUCTOISOMERASE"/>
    <property type="match status" value="1"/>
</dbReference>
<dbReference type="PANTHER" id="PTHR30525:SF0">
    <property type="entry name" value="1-DEOXY-D-XYLULOSE 5-PHOSPHATE REDUCTOISOMERASE, CHLOROPLASTIC"/>
    <property type="match status" value="1"/>
</dbReference>
<dbReference type="Pfam" id="PF08436">
    <property type="entry name" value="DXP_redisom_C"/>
    <property type="match status" value="1"/>
</dbReference>
<dbReference type="Pfam" id="PF02670">
    <property type="entry name" value="DXP_reductoisom"/>
    <property type="match status" value="1"/>
</dbReference>
<dbReference type="Pfam" id="PF13288">
    <property type="entry name" value="DXPR_C"/>
    <property type="match status" value="1"/>
</dbReference>
<dbReference type="PIRSF" id="PIRSF006205">
    <property type="entry name" value="Dxp_reductismrs"/>
    <property type="match status" value="1"/>
</dbReference>
<dbReference type="SUPFAM" id="SSF69055">
    <property type="entry name" value="1-deoxy-D-xylulose-5-phosphate reductoisomerase, C-terminal domain"/>
    <property type="match status" value="1"/>
</dbReference>
<dbReference type="SUPFAM" id="SSF55347">
    <property type="entry name" value="Glyceraldehyde-3-phosphate dehydrogenase-like, C-terminal domain"/>
    <property type="match status" value="1"/>
</dbReference>
<dbReference type="SUPFAM" id="SSF51735">
    <property type="entry name" value="NAD(P)-binding Rossmann-fold domains"/>
    <property type="match status" value="1"/>
</dbReference>
<protein>
    <recommendedName>
        <fullName evidence="1">1-deoxy-D-xylulose 5-phosphate reductoisomerase</fullName>
        <shortName evidence="1">DXP reductoisomerase</shortName>
        <ecNumber evidence="1">1.1.1.267</ecNumber>
    </recommendedName>
    <alternativeName>
        <fullName evidence="1">1-deoxyxylulose-5-phosphate reductoisomerase</fullName>
    </alternativeName>
    <alternativeName>
        <fullName evidence="1">2-C-methyl-D-erythritol 4-phosphate synthase</fullName>
    </alternativeName>
</protein>
<proteinExistence type="inferred from homology"/>
<sequence>MKQLTILGSTGSIGCSTLDVVRHNPDSFRVIALVAGKNVARMAEQCLEFSPRYAVMDDTSSAEQLKIMLQQHGSRTEVLSGQQAACEMAALDEVGHVMAAIVGAAGLLPTLAAIRAGKTILLANKESLVTCGRLFMDEVKRSNARLLPVDSEHNAIFQSLPQSIQHNLGYADLEQNGVTSILLTGSGGPFRETPMCDLAAMTPDQACRHPNWSMGRKISVDSATMMNKGLEYIEARWLFNASARQMEVLIHPQSVIHSMVRYQDGSVLAQLGEPDMRTPIAHTMAWPNRVTSGAQPLDFCKLSALTFSAPDYQRYPCLKLAMEAFEQGQAATTALNAANEITVAAFLAQQIRFTDIAGLNLAVLERMDLQEPASVEDVLQVDAIAREVARKQVIRLSR</sequence>
<organism>
    <name type="scientific">Salmonella paratyphi A (strain ATCC 9150 / SARB42)</name>
    <dbReference type="NCBI Taxonomy" id="295319"/>
    <lineage>
        <taxon>Bacteria</taxon>
        <taxon>Pseudomonadati</taxon>
        <taxon>Pseudomonadota</taxon>
        <taxon>Gammaproteobacteria</taxon>
        <taxon>Enterobacterales</taxon>
        <taxon>Enterobacteriaceae</taxon>
        <taxon>Salmonella</taxon>
    </lineage>
</organism>
<accession>Q5PD59</accession>
<keyword id="KW-0414">Isoprene biosynthesis</keyword>
<keyword id="KW-0464">Manganese</keyword>
<keyword id="KW-0479">Metal-binding</keyword>
<keyword id="KW-0521">NADP</keyword>
<keyword id="KW-0560">Oxidoreductase</keyword>
<comment type="function">
    <text evidence="1">Catalyzes the NADPH-dependent rearrangement and reduction of 1-deoxy-D-xylulose-5-phosphate (DXP) to 2-C-methyl-D-erythritol 4-phosphate (MEP).</text>
</comment>
<comment type="catalytic activity">
    <reaction evidence="1">
        <text>2-C-methyl-D-erythritol 4-phosphate + NADP(+) = 1-deoxy-D-xylulose 5-phosphate + NADPH + H(+)</text>
        <dbReference type="Rhea" id="RHEA:13717"/>
        <dbReference type="ChEBI" id="CHEBI:15378"/>
        <dbReference type="ChEBI" id="CHEBI:57783"/>
        <dbReference type="ChEBI" id="CHEBI:57792"/>
        <dbReference type="ChEBI" id="CHEBI:58262"/>
        <dbReference type="ChEBI" id="CHEBI:58349"/>
        <dbReference type="EC" id="1.1.1.267"/>
    </reaction>
    <physiologicalReaction direction="right-to-left" evidence="1">
        <dbReference type="Rhea" id="RHEA:13719"/>
    </physiologicalReaction>
</comment>
<comment type="cofactor">
    <cofactor evidence="1">
        <name>Mg(2+)</name>
        <dbReference type="ChEBI" id="CHEBI:18420"/>
    </cofactor>
    <cofactor evidence="1">
        <name>Mn(2+)</name>
        <dbReference type="ChEBI" id="CHEBI:29035"/>
    </cofactor>
</comment>
<comment type="pathway">
    <text evidence="1">Isoprenoid biosynthesis; isopentenyl diphosphate biosynthesis via DXP pathway; isopentenyl diphosphate from 1-deoxy-D-xylulose 5-phosphate: step 1/6.</text>
</comment>
<comment type="subunit">
    <text evidence="1">Homodimer.</text>
</comment>
<comment type="similarity">
    <text evidence="1">Belongs to the DXR family.</text>
</comment>
<feature type="chain" id="PRO_0000163708" description="1-deoxy-D-xylulose 5-phosphate reductoisomerase">
    <location>
        <begin position="1"/>
        <end position="398"/>
    </location>
</feature>
<feature type="binding site" evidence="1">
    <location>
        <position position="10"/>
    </location>
    <ligand>
        <name>NADPH</name>
        <dbReference type="ChEBI" id="CHEBI:57783"/>
    </ligand>
</feature>
<feature type="binding site" evidence="1">
    <location>
        <position position="11"/>
    </location>
    <ligand>
        <name>NADPH</name>
        <dbReference type="ChEBI" id="CHEBI:57783"/>
    </ligand>
</feature>
<feature type="binding site" evidence="1">
    <location>
        <position position="12"/>
    </location>
    <ligand>
        <name>NADPH</name>
        <dbReference type="ChEBI" id="CHEBI:57783"/>
    </ligand>
</feature>
<feature type="binding site" evidence="1">
    <location>
        <position position="13"/>
    </location>
    <ligand>
        <name>NADPH</name>
        <dbReference type="ChEBI" id="CHEBI:57783"/>
    </ligand>
</feature>
<feature type="binding site" evidence="1">
    <location>
        <position position="36"/>
    </location>
    <ligand>
        <name>NADPH</name>
        <dbReference type="ChEBI" id="CHEBI:57783"/>
    </ligand>
</feature>
<feature type="binding site" evidence="1">
    <location>
        <position position="37"/>
    </location>
    <ligand>
        <name>NADPH</name>
        <dbReference type="ChEBI" id="CHEBI:57783"/>
    </ligand>
</feature>
<feature type="binding site" evidence="1">
    <location>
        <position position="38"/>
    </location>
    <ligand>
        <name>NADPH</name>
        <dbReference type="ChEBI" id="CHEBI:57783"/>
    </ligand>
</feature>
<feature type="binding site" evidence="1">
    <location>
        <position position="124"/>
    </location>
    <ligand>
        <name>NADPH</name>
        <dbReference type="ChEBI" id="CHEBI:57783"/>
    </ligand>
</feature>
<feature type="binding site" evidence="1">
    <location>
        <position position="125"/>
    </location>
    <ligand>
        <name>1-deoxy-D-xylulose 5-phosphate</name>
        <dbReference type="ChEBI" id="CHEBI:57792"/>
    </ligand>
</feature>
<feature type="binding site" evidence="1">
    <location>
        <position position="126"/>
    </location>
    <ligand>
        <name>NADPH</name>
        <dbReference type="ChEBI" id="CHEBI:57783"/>
    </ligand>
</feature>
<feature type="binding site" evidence="1">
    <location>
        <position position="150"/>
    </location>
    <ligand>
        <name>Mn(2+)</name>
        <dbReference type="ChEBI" id="CHEBI:29035"/>
    </ligand>
</feature>
<feature type="binding site" evidence="1">
    <location>
        <position position="151"/>
    </location>
    <ligand>
        <name>1-deoxy-D-xylulose 5-phosphate</name>
        <dbReference type="ChEBI" id="CHEBI:57792"/>
    </ligand>
</feature>
<feature type="binding site" evidence="1">
    <location>
        <position position="152"/>
    </location>
    <ligand>
        <name>1-deoxy-D-xylulose 5-phosphate</name>
        <dbReference type="ChEBI" id="CHEBI:57792"/>
    </ligand>
</feature>
<feature type="binding site" evidence="1">
    <location>
        <position position="152"/>
    </location>
    <ligand>
        <name>Mn(2+)</name>
        <dbReference type="ChEBI" id="CHEBI:29035"/>
    </ligand>
</feature>
<feature type="binding site" evidence="1">
    <location>
        <position position="186"/>
    </location>
    <ligand>
        <name>1-deoxy-D-xylulose 5-phosphate</name>
        <dbReference type="ChEBI" id="CHEBI:57792"/>
    </ligand>
</feature>
<feature type="binding site" evidence="1">
    <location>
        <position position="209"/>
    </location>
    <ligand>
        <name>1-deoxy-D-xylulose 5-phosphate</name>
        <dbReference type="ChEBI" id="CHEBI:57792"/>
    </ligand>
</feature>
<feature type="binding site" evidence="1">
    <location>
        <position position="215"/>
    </location>
    <ligand>
        <name>NADPH</name>
        <dbReference type="ChEBI" id="CHEBI:57783"/>
    </ligand>
</feature>
<feature type="binding site" evidence="1">
    <location>
        <position position="222"/>
    </location>
    <ligand>
        <name>1-deoxy-D-xylulose 5-phosphate</name>
        <dbReference type="ChEBI" id="CHEBI:57792"/>
    </ligand>
</feature>
<feature type="binding site" evidence="1">
    <location>
        <position position="227"/>
    </location>
    <ligand>
        <name>1-deoxy-D-xylulose 5-phosphate</name>
        <dbReference type="ChEBI" id="CHEBI:57792"/>
    </ligand>
</feature>
<feature type="binding site" evidence="1">
    <location>
        <position position="228"/>
    </location>
    <ligand>
        <name>1-deoxy-D-xylulose 5-phosphate</name>
        <dbReference type="ChEBI" id="CHEBI:57792"/>
    </ligand>
</feature>
<feature type="binding site" evidence="1">
    <location>
        <position position="231"/>
    </location>
    <ligand>
        <name>1-deoxy-D-xylulose 5-phosphate</name>
        <dbReference type="ChEBI" id="CHEBI:57792"/>
    </ligand>
</feature>
<feature type="binding site" evidence="1">
    <location>
        <position position="231"/>
    </location>
    <ligand>
        <name>Mn(2+)</name>
        <dbReference type="ChEBI" id="CHEBI:29035"/>
    </ligand>
</feature>